<name>VP6_ROTH7</name>
<reference key="1">
    <citation type="journal article" date="2008" name="J. Virol.">
        <title>Full genome-based classification of rotaviruses reveals a common origin between human Wa-Like and porcine rotavirus strains and human DS-1-like and bovine rotavirus strains.</title>
        <authorList>
            <person name="Matthijnssens J."/>
            <person name="Ciarlet M."/>
            <person name="Heiman E.M."/>
            <person name="Arijs I."/>
            <person name="Delbeke T."/>
            <person name="McDonald S.M."/>
            <person name="Palombo E.A."/>
            <person name="Iturriza-Gomara M."/>
            <person name="Maes P."/>
            <person name="Patton J.T."/>
            <person name="Rahman M."/>
            <person name="Van Ranst M."/>
        </authorList>
    </citation>
    <scope>NUCLEOTIDE SEQUENCE [GENOMIC RNA]</scope>
</reference>
<dbReference type="EMBL" id="EF583020">
    <property type="protein sequence ID" value="ABU87829.1"/>
    <property type="molecule type" value="Genomic_RNA"/>
</dbReference>
<dbReference type="SMR" id="B1NKR2"/>
<dbReference type="Proteomes" id="UP000001456">
    <property type="component" value="Genome"/>
</dbReference>
<dbReference type="GO" id="GO:0019031">
    <property type="term" value="C:viral envelope"/>
    <property type="evidence" value="ECO:0007669"/>
    <property type="project" value="UniProtKB-UniRule"/>
</dbReference>
<dbReference type="GO" id="GO:0039626">
    <property type="term" value="C:viral intermediate capsid"/>
    <property type="evidence" value="ECO:0007669"/>
    <property type="project" value="UniProtKB-UniRule"/>
</dbReference>
<dbReference type="GO" id="GO:0046789">
    <property type="term" value="F:host cell surface receptor binding"/>
    <property type="evidence" value="ECO:0007669"/>
    <property type="project" value="UniProtKB-UniRule"/>
</dbReference>
<dbReference type="GO" id="GO:0046872">
    <property type="term" value="F:metal ion binding"/>
    <property type="evidence" value="ECO:0007669"/>
    <property type="project" value="UniProtKB-UniRule"/>
</dbReference>
<dbReference type="GO" id="GO:0005198">
    <property type="term" value="F:structural molecule activity"/>
    <property type="evidence" value="ECO:0007669"/>
    <property type="project" value="UniProtKB-UniRule"/>
</dbReference>
<dbReference type="GO" id="GO:0019064">
    <property type="term" value="P:fusion of virus membrane with host plasma membrane"/>
    <property type="evidence" value="ECO:0007669"/>
    <property type="project" value="UniProtKB-UniRule"/>
</dbReference>
<dbReference type="FunFam" id="2.60.120.170:FF:000001">
    <property type="entry name" value="Intermediate capsid protein VP6"/>
    <property type="match status" value="1"/>
</dbReference>
<dbReference type="Gene3D" id="2.60.120.170">
    <property type="match status" value="1"/>
</dbReference>
<dbReference type="Gene3D" id="1.10.1350.10">
    <property type="entry name" value="Viral capsid alpha domain"/>
    <property type="match status" value="1"/>
</dbReference>
<dbReference type="HAMAP" id="MF_04126">
    <property type="entry name" value="Rota_VP6"/>
    <property type="match status" value="1"/>
</dbReference>
<dbReference type="HAMAP" id="MF_04129">
    <property type="entry name" value="Rota_VP6_A"/>
    <property type="match status" value="1"/>
</dbReference>
<dbReference type="InterPro" id="IPR008980">
    <property type="entry name" value="Capsid_hemagglutn"/>
</dbReference>
<dbReference type="InterPro" id="IPR001385">
    <property type="entry name" value="Rotavirus_A/C_VP6"/>
</dbReference>
<dbReference type="InterPro" id="IPR008935">
    <property type="entry name" value="Virus_capsid_a-hlx_vir"/>
</dbReference>
<dbReference type="Pfam" id="PF00980">
    <property type="entry name" value="Rota_Capsid_VP6"/>
    <property type="match status" value="1"/>
</dbReference>
<dbReference type="SUPFAM" id="SSF48345">
    <property type="entry name" value="A virus capsid protein alpha-helical domain"/>
    <property type="match status" value="1"/>
</dbReference>
<dbReference type="SUPFAM" id="SSF49818">
    <property type="entry name" value="Viral protein domain"/>
    <property type="match status" value="1"/>
</dbReference>
<proteinExistence type="inferred from homology"/>
<feature type="chain" id="PRO_0000368166" description="Intermediate capsid protein VP6">
    <location>
        <begin position="1"/>
        <end position="397"/>
    </location>
</feature>
<feature type="region of interest" description="Interaction with the inner capsid protein VP2" evidence="1">
    <location>
        <begin position="62"/>
        <end position="73"/>
    </location>
</feature>
<feature type="binding site" evidence="1">
    <location>
        <position position="153"/>
    </location>
    <ligand>
        <name>Zn(2+)</name>
        <dbReference type="ChEBI" id="CHEBI:29105"/>
        <note>ligand shared between all trimeric partners</note>
    </ligand>
</feature>
<feature type="binding site" evidence="1">
    <location>
        <position position="266"/>
    </location>
    <ligand>
        <name>Ca(2+)</name>
        <dbReference type="ChEBI" id="CHEBI:29108"/>
    </ligand>
</feature>
<feature type="binding site" evidence="1">
    <location>
        <position position="286"/>
    </location>
    <ligand>
        <name>Ca(2+)</name>
        <dbReference type="ChEBI" id="CHEBI:29108"/>
    </ligand>
</feature>
<sequence>MDVLYSLSKTLKDARDKIVEGTLYSNVSDLIQQFNQMIITMNGNEFQTGGIGNLPIRNWSFDFGLLGTTLLNLDANYVETARNTIDYFVDFVDNVCMDEMVRESQRNGIAPQSDSLRKLSGIKFKRINFDNSSEYIENWNLQNRRQRTGFTFHKPNIFPYSASFTLNRSQPAHDNLMGTMWLNAGSEIQVAGFDYSCAINAPANTQQFEHIVQLRRVLTTATITLLPDAERFSFPRVINSADGATTWYFNPVILRPNNVEVEFLLNGQIINTYQARFGTIIARNFDTIRLSFQLMRPPNMTPAVAALFPNAQPFEHHATVGLTLRIESAVCESVLADASETMLANVTSVRQEYAIPVGPVFPPGMNWTDLITNYSPSREDNLQRVFTVASIRSMLVK</sequence>
<organismHost>
    <name type="scientific">Homo sapiens</name>
    <name type="common">Human</name>
    <dbReference type="NCBI Taxonomy" id="9606"/>
</organismHost>
<evidence type="ECO:0000255" key="1">
    <source>
        <dbReference type="HAMAP-Rule" id="MF_04129"/>
    </source>
</evidence>
<protein>
    <recommendedName>
        <fullName evidence="1">Intermediate capsid protein VP6</fullName>
    </recommendedName>
</protein>
<keyword id="KW-0106">Calcium</keyword>
<keyword id="KW-0167">Capsid protein</keyword>
<keyword id="KW-1154">Intermediate capsid protein</keyword>
<keyword id="KW-0479">Metal-binding</keyword>
<keyword id="KW-0832">Ubl conjugation</keyword>
<keyword id="KW-0946">Virion</keyword>
<keyword id="KW-0862">Zinc</keyword>
<accession>B1NKR2</accession>
<organism>
    <name type="scientific">Rotavirus A (isolate RVA/Human/United Kingdom/A64/1987/G10P11[14])</name>
    <name type="common">RV-A</name>
    <dbReference type="NCBI Taxonomy" id="578827"/>
    <lineage>
        <taxon>Viruses</taxon>
        <taxon>Riboviria</taxon>
        <taxon>Orthornavirae</taxon>
        <taxon>Duplornaviricota</taxon>
        <taxon>Resentoviricetes</taxon>
        <taxon>Reovirales</taxon>
        <taxon>Sedoreoviridae</taxon>
        <taxon>Rotavirus</taxon>
        <taxon>Rotavirus A</taxon>
    </lineage>
</organism>
<comment type="function">
    <text evidence="1">Intermediate capsid protein that self assembles to form an icosahedral capsid with a T=13 symmetry, which consists of 230 trimers of VP6, with channels at each of its five-fold vertices. This capsid constitutes the middle concentric layer of the viral mature particle. The innermost VP2 capsid and the intermediate VP6 capsid remain intact following cell entry to protect the dsRNA from degradation and to prevent unfavorable antiviral responses in the host cell during all the replication cycle of the virus. Nascent transcripts are transcribed within the structural confines of this double-layered particle (DLP) and are extruded through the channels at the five-fold axes. VP6 is required for the transcription activity of the DLP.</text>
</comment>
<comment type="subunit">
    <text evidence="1">Homotrimer. Interacts with the inner capsid protein VP2. Interacts with the outer capsid glycoprotein VP7. Interacts with the outer capsid protein VP5*.</text>
</comment>
<comment type="subcellular location">
    <subcellularLocation>
        <location evidence="1">Virion</location>
    </subcellularLocation>
    <text evidence="1">Component of the intermediate capsid. Also found in spherical cytoplasmic structures, called virus factories, that appear early after infection and are the site of viral replication and packaging.</text>
</comment>
<comment type="PTM">
    <text evidence="1">The N-terminus is blocked.</text>
</comment>
<comment type="PTM">
    <text evidence="1">Sumoylated with SUMO1 and SUMO2. Sumoylation of viral proteins seems to have a positive role on viral replication.</text>
</comment>
<comment type="miscellaneous">
    <text evidence="1">The VP6 trimer contains a zinc ion located at the center of the molecule. The zinc ion is not essential for either trimerization or transcription activity of the DLP. Zinc-depleted VP6 has an increased sensitivity to proteases.</text>
</comment>
<comment type="similarity">
    <text evidence="1">Belongs to the rotavirus VP6 family.</text>
</comment>